<organism>
    <name type="scientific">Canis lupus familiaris</name>
    <name type="common">Dog</name>
    <name type="synonym">Canis familiaris</name>
    <dbReference type="NCBI Taxonomy" id="9615"/>
    <lineage>
        <taxon>Eukaryota</taxon>
        <taxon>Metazoa</taxon>
        <taxon>Chordata</taxon>
        <taxon>Craniata</taxon>
        <taxon>Vertebrata</taxon>
        <taxon>Euteleostomi</taxon>
        <taxon>Mammalia</taxon>
        <taxon>Eutheria</taxon>
        <taxon>Laurasiatheria</taxon>
        <taxon>Carnivora</taxon>
        <taxon>Caniformia</taxon>
        <taxon>Canidae</taxon>
        <taxon>Canis</taxon>
    </lineage>
</organism>
<sequence length="110" mass="12487">MVLLESEQFLTELTRLFQKCRLSGSVFITLKKYDGRTKPIPRKGSVEGFEPSDNKCLLRATDGKKKISTVVSSKEVNKFQMAYSNLLRANMDGLKKRDKKSKSKKSKPAQ</sequence>
<protein>
    <recommendedName>
        <fullName>Signal recognition particle 14 kDa protein</fullName>
        <shortName>SRP14</shortName>
    </recommendedName>
</protein>
<evidence type="ECO:0000250" key="1">
    <source>
        <dbReference type="UniProtKB" id="P16254"/>
    </source>
</evidence>
<evidence type="ECO:0000250" key="2">
    <source>
        <dbReference type="UniProtKB" id="P37108"/>
    </source>
</evidence>
<evidence type="ECO:0000256" key="3">
    <source>
        <dbReference type="SAM" id="MobiDB-lite"/>
    </source>
</evidence>
<evidence type="ECO:0000269" key="4">
    <source>
    </source>
</evidence>
<evidence type="ECO:0000269" key="5">
    <source>
    </source>
</evidence>
<evidence type="ECO:0000305" key="6"/>
<comment type="function">
    <text evidence="4 5">Component of the signal recognition particle (SRP) complex, a ribonucleoprotein complex that mediates the cotranslational targeting of secretory and membrane proteins to the endoplasmic reticulum (ER) (PubMed:6938958). SRP9 together with SRP14 and the Alu portion of the SRP RNA, constitutes the elongation arrest domain of SRP (PubMed:6413076, PubMed:6938958). The complex of SRP9 and SRP14 is required for SRP RNA binding (PubMed:6413076, PubMed:6938958).</text>
</comment>
<comment type="subunit">
    <text evidence="4 5">Heterodimer with SRP9; binds RNA as heterodimer (PubMed:6413076). Component of a signal recognition particle complex that consists of a 7SL RNA molecule of 300 nucleotides and six protein subunits: SRP72, SRP68, SRP54, SRP19, SRP14 and SRP9 (PubMed:6413076, PubMed:6938958).</text>
</comment>
<comment type="subcellular location">
    <subcellularLocation>
        <location>Cytoplasm</location>
    </subcellularLocation>
</comment>
<comment type="similarity">
    <text evidence="6">Belongs to the SRP14 family.</text>
</comment>
<feature type="initiator methionine" description="Removed" evidence="2">
    <location>
        <position position="1"/>
    </location>
</feature>
<feature type="chain" id="PRO_0000135188" description="Signal recognition particle 14 kDa protein">
    <location>
        <begin position="2"/>
        <end position="110"/>
    </location>
</feature>
<feature type="region of interest" description="Disordered" evidence="3">
    <location>
        <begin position="90"/>
        <end position="110"/>
    </location>
</feature>
<feature type="compositionally biased region" description="Basic residues" evidence="3">
    <location>
        <begin position="96"/>
        <end position="110"/>
    </location>
</feature>
<feature type="modified residue" description="Phosphoserine" evidence="1">
    <location>
        <position position="45"/>
    </location>
</feature>
<feature type="sequence conflict" description="In Ref. 2; AA sequence." evidence="6" ref="2">
    <original>D</original>
    <variation>C</variation>
    <location>
        <position position="92"/>
    </location>
</feature>
<name>SRP14_CANLF</name>
<accession>P16255</accession>
<accession>Q28277</accession>
<keyword id="KW-0002">3D-structure</keyword>
<keyword id="KW-0963">Cytoplasm</keyword>
<keyword id="KW-0903">Direct protein sequencing</keyword>
<keyword id="KW-0597">Phosphoprotein</keyword>
<keyword id="KW-1185">Reference proteome</keyword>
<keyword id="KW-0687">Ribonucleoprotein</keyword>
<keyword id="KW-0694">RNA-binding</keyword>
<keyword id="KW-0733">Signal recognition particle</keyword>
<reference key="1">
    <citation type="submission" date="1996-06" db="EMBL/GenBank/DDBJ databases">
        <title>Canine SRP14 coding region.</title>
        <authorList>
            <person name="Baugh C."/>
            <person name="Wilson C."/>
        </authorList>
    </citation>
    <scope>NUCLEOTIDE SEQUENCE [MRNA]</scope>
</reference>
<reference key="2">
    <citation type="journal article" date="1989" name="Proc. Natl. Acad. Sci. U.S.A.">
        <title>Isolation of a cDNA clone of the 14-kDa subunit of the signal recognition particle by cross-hybridization of differently primed polymerase chain reactions.</title>
        <authorList>
            <person name="Strub K."/>
            <person name="Walter P."/>
        </authorList>
    </citation>
    <scope>NUCLEOTIDE SEQUENCE [MRNA] OF 14-95</scope>
    <scope>PROTEIN SEQUENCE OF 2-19 AND 77-95</scope>
    <source>
        <tissue>Kidney</tissue>
    </source>
</reference>
<reference key="3">
    <citation type="journal article" date="1980" name="Proc. Natl. Acad. Sci. U.S.A.">
        <title>Purification of a membrane-associated protein complex required for protein translocation across the endoplasmic reticulum.</title>
        <authorList>
            <person name="Walter P."/>
            <person name="Blobel G."/>
        </authorList>
    </citation>
    <scope>FUNCTION</scope>
    <scope>IDENTIFICATION IN A SIGNAL RECOGNITION PARTICLE COMPLEX</scope>
</reference>
<reference key="4">
    <citation type="journal article" date="1983" name="Cell">
        <title>Disassembly and reconstitution of signal recognition particle.</title>
        <authorList>
            <person name="Walter P."/>
            <person name="Blobel G."/>
        </authorList>
    </citation>
    <scope>FUNCTION</scope>
    <scope>RNA BINDING</scope>
    <scope>SUBUNIT</scope>
</reference>
<dbReference type="EMBL" id="U57440">
    <property type="protein sequence ID" value="AAB02232.1"/>
    <property type="molecule type" value="mRNA"/>
</dbReference>
<dbReference type="EMBL" id="M29265">
    <property type="protein sequence ID" value="AAA30898.1"/>
    <property type="molecule type" value="mRNA"/>
</dbReference>
<dbReference type="PIR" id="A34501">
    <property type="entry name" value="A34501"/>
</dbReference>
<dbReference type="RefSeq" id="NP_001003251.1">
    <property type="nucleotide sequence ID" value="NM_001003251.1"/>
</dbReference>
<dbReference type="PDB" id="4UE5">
    <property type="method" value="EM"/>
    <property type="resolution" value="9.00 A"/>
    <property type="chains" value="B=2-95"/>
</dbReference>
<dbReference type="PDB" id="6FRK">
    <property type="method" value="EM"/>
    <property type="resolution" value="3.70 A"/>
    <property type="chains" value="z=1-110"/>
</dbReference>
<dbReference type="PDB" id="6R6G">
    <property type="method" value="EM"/>
    <property type="resolution" value="3.70 A"/>
    <property type="chains" value="AE=2-95"/>
</dbReference>
<dbReference type="PDB" id="7OBR">
    <property type="method" value="EM"/>
    <property type="resolution" value="2.80 A"/>
    <property type="chains" value="t=1-110"/>
</dbReference>
<dbReference type="PDBsum" id="4UE5"/>
<dbReference type="PDBsum" id="6FRK"/>
<dbReference type="PDBsum" id="6R6G"/>
<dbReference type="PDBsum" id="7OBR"/>
<dbReference type="EMDB" id="EMD-12801"/>
<dbReference type="EMDB" id="EMD-4300"/>
<dbReference type="EMDB" id="EMD-4735"/>
<dbReference type="SMR" id="P16255"/>
<dbReference type="FunCoup" id="P16255">
    <property type="interactions" value="2009"/>
</dbReference>
<dbReference type="STRING" id="9615.ENSCAFP00000041095"/>
<dbReference type="PaxDb" id="9612-ENSCAFP00000041095"/>
<dbReference type="GeneID" id="403930"/>
<dbReference type="KEGG" id="cfa:403930"/>
<dbReference type="CTD" id="6727"/>
<dbReference type="eggNOG" id="KOG1761">
    <property type="taxonomic scope" value="Eukaryota"/>
</dbReference>
<dbReference type="InParanoid" id="P16255"/>
<dbReference type="OrthoDB" id="19209at2759"/>
<dbReference type="EvolutionaryTrace" id="P16255"/>
<dbReference type="Proteomes" id="UP000002254">
    <property type="component" value="Unplaced"/>
</dbReference>
<dbReference type="Proteomes" id="UP000694429">
    <property type="component" value="Unplaced"/>
</dbReference>
<dbReference type="Proteomes" id="UP000694542">
    <property type="component" value="Unplaced"/>
</dbReference>
<dbReference type="Proteomes" id="UP000805418">
    <property type="component" value="Unplaced"/>
</dbReference>
<dbReference type="GO" id="GO:0005829">
    <property type="term" value="C:cytosol"/>
    <property type="evidence" value="ECO:0000304"/>
    <property type="project" value="Reactome"/>
</dbReference>
<dbReference type="GO" id="GO:0005786">
    <property type="term" value="C:signal recognition particle, endoplasmic reticulum targeting"/>
    <property type="evidence" value="ECO:0000318"/>
    <property type="project" value="GO_Central"/>
</dbReference>
<dbReference type="GO" id="GO:0008312">
    <property type="term" value="F:7S RNA binding"/>
    <property type="evidence" value="ECO:0007669"/>
    <property type="project" value="InterPro"/>
</dbReference>
<dbReference type="GO" id="GO:0030942">
    <property type="term" value="F:endoplasmic reticulum signal peptide binding"/>
    <property type="evidence" value="ECO:0007669"/>
    <property type="project" value="InterPro"/>
</dbReference>
<dbReference type="GO" id="GO:0045047">
    <property type="term" value="P:protein targeting to ER"/>
    <property type="evidence" value="ECO:0000318"/>
    <property type="project" value="GO_Central"/>
</dbReference>
<dbReference type="GO" id="GO:0006614">
    <property type="term" value="P:SRP-dependent cotranslational protein targeting to membrane"/>
    <property type="evidence" value="ECO:0007669"/>
    <property type="project" value="InterPro"/>
</dbReference>
<dbReference type="FunFam" id="3.30.720.10:FF:000002">
    <property type="entry name" value="signal recognition particle 14 kDa protein-like"/>
    <property type="match status" value="1"/>
</dbReference>
<dbReference type="Gene3D" id="3.30.720.10">
    <property type="entry name" value="Signal recognition particle alu RNA binding heterodimer, srp9/1"/>
    <property type="match status" value="1"/>
</dbReference>
<dbReference type="InterPro" id="IPR003210">
    <property type="entry name" value="Signal_recog_particle_SRP14"/>
</dbReference>
<dbReference type="InterPro" id="IPR009018">
    <property type="entry name" value="Signal_recog_particle_SRP9/14"/>
</dbReference>
<dbReference type="PANTHER" id="PTHR12013">
    <property type="entry name" value="SIGNAL RECOGNITION PARTICLE 14 KD PROTEIN"/>
    <property type="match status" value="1"/>
</dbReference>
<dbReference type="Pfam" id="PF02290">
    <property type="entry name" value="SRP14"/>
    <property type="match status" value="1"/>
</dbReference>
<dbReference type="SUPFAM" id="SSF54762">
    <property type="entry name" value="Signal recognition particle alu RNA binding heterodimer, SRP9/14"/>
    <property type="match status" value="1"/>
</dbReference>
<proteinExistence type="evidence at protein level"/>
<gene>
    <name type="primary">SRP14</name>
</gene>